<gene>
    <name evidence="1" type="primary">aroE</name>
    <name evidence="2" type="synonym">aroD</name>
    <name type="ordered locus">TC_0649</name>
</gene>
<reference key="1">
    <citation type="journal article" date="2000" name="Nucleic Acids Res.">
        <title>Genome sequences of Chlamydia trachomatis MoPn and Chlamydia pneumoniae AR39.</title>
        <authorList>
            <person name="Read T.D."/>
            <person name="Brunham R.C."/>
            <person name="Shen C."/>
            <person name="Gill S.R."/>
            <person name="Heidelberg J.F."/>
            <person name="White O."/>
            <person name="Hickey E.K."/>
            <person name="Peterson J.D."/>
            <person name="Utterback T.R."/>
            <person name="Berry K.J."/>
            <person name="Bass S."/>
            <person name="Linher K.D."/>
            <person name="Weidman J.F."/>
            <person name="Khouri H.M."/>
            <person name="Craven B."/>
            <person name="Bowman C."/>
            <person name="Dodson R.J."/>
            <person name="Gwinn M.L."/>
            <person name="Nelson W.C."/>
            <person name="DeBoy R.T."/>
            <person name="Kolonay J.F."/>
            <person name="McClarty G."/>
            <person name="Salzberg S.L."/>
            <person name="Eisen J.A."/>
            <person name="Fraser C.M."/>
        </authorList>
    </citation>
    <scope>NUCLEOTIDE SEQUENCE [LARGE SCALE GENOMIC DNA]</scope>
    <source>
        <strain>MoPn / Nigg</strain>
    </source>
</reference>
<feature type="chain" id="PRO_0000138822" description="Shikimate biosynthesis protein AroDE">
    <location>
        <begin position="1"/>
        <end position="478"/>
    </location>
</feature>
<feature type="region of interest" description="3-dehydroquinate dehydratase" evidence="3">
    <location>
        <begin position="1"/>
        <end position="208"/>
    </location>
</feature>
<feature type="region of interest" description="Shikimate 5-dehydrogenase" evidence="3">
    <location>
        <begin position="209"/>
        <end position="478"/>
    </location>
</feature>
<feature type="active site" description="Proton donor/acceptor; for 3-dehydroquinate dehydratase activity" evidence="2">
    <location>
        <position position="110"/>
    </location>
</feature>
<feature type="active site" description="Schiff-base intermediate with substrate; for 3-dehydroquinate dehydratase activity" evidence="2">
    <location>
        <position position="133"/>
    </location>
</feature>
<feature type="active site" description="Proton acceptor; for shikimate dehydrogenase activity" evidence="1">
    <location>
        <position position="277"/>
    </location>
</feature>
<feature type="binding site" evidence="2">
    <location>
        <position position="21"/>
    </location>
    <ligand>
        <name>3-dehydroquinate</name>
        <dbReference type="ChEBI" id="CHEBI:32364"/>
    </ligand>
</feature>
<feature type="binding site" evidence="2">
    <location>
        <begin position="29"/>
        <end position="31"/>
    </location>
    <ligand>
        <name>3-dehydroquinate</name>
        <dbReference type="ChEBI" id="CHEBI:32364"/>
    </ligand>
</feature>
<feature type="binding site" evidence="2">
    <location>
        <begin position="55"/>
        <end position="57"/>
    </location>
    <ligand>
        <name>3-dehydroquinate</name>
        <dbReference type="ChEBI" id="CHEBI:32364"/>
    </ligand>
</feature>
<feature type="binding site" evidence="2">
    <location>
        <position position="171"/>
    </location>
    <ligand>
        <name>3-dehydroquinate</name>
        <dbReference type="ChEBI" id="CHEBI:32364"/>
    </ligand>
</feature>
<feature type="binding site" evidence="2">
    <location>
        <position position="196"/>
    </location>
    <ligand>
        <name>3-dehydroquinate</name>
        <dbReference type="ChEBI" id="CHEBI:32364"/>
    </ligand>
</feature>
<feature type="binding site" evidence="1">
    <location>
        <begin position="226"/>
        <end position="228"/>
    </location>
    <ligand>
        <name>shikimate</name>
        <dbReference type="ChEBI" id="CHEBI:36208"/>
    </ligand>
</feature>
<feature type="binding site" evidence="1">
    <location>
        <position position="298"/>
    </location>
    <ligand>
        <name>shikimate</name>
        <dbReference type="ChEBI" id="CHEBI:36208"/>
    </ligand>
</feature>
<feature type="binding site" evidence="1">
    <location>
        <position position="313"/>
    </location>
    <ligand>
        <name>shikimate</name>
        <dbReference type="ChEBI" id="CHEBI:36208"/>
    </ligand>
</feature>
<feature type="binding site" evidence="1">
    <location>
        <begin position="337"/>
        <end position="341"/>
    </location>
    <ligand>
        <name>NADP(+)</name>
        <dbReference type="ChEBI" id="CHEBI:58349"/>
    </ligand>
</feature>
<feature type="binding site" evidence="1">
    <location>
        <begin position="360"/>
        <end position="362"/>
    </location>
    <ligand>
        <name>NADP(+)</name>
        <dbReference type="ChEBI" id="CHEBI:58349"/>
    </ligand>
</feature>
<feature type="binding site" evidence="1">
    <location>
        <position position="435"/>
    </location>
    <ligand>
        <name>NADP(+)</name>
        <dbReference type="ChEBI" id="CHEBI:58349"/>
    </ligand>
</feature>
<feature type="binding site" evidence="1">
    <location>
        <position position="442"/>
    </location>
    <ligand>
        <name>shikimate</name>
        <dbReference type="ChEBI" id="CHEBI:36208"/>
    </ligand>
</feature>
<organism>
    <name type="scientific">Chlamydia muridarum (strain MoPn / Nigg)</name>
    <dbReference type="NCBI Taxonomy" id="243161"/>
    <lineage>
        <taxon>Bacteria</taxon>
        <taxon>Pseudomonadati</taxon>
        <taxon>Chlamydiota</taxon>
        <taxon>Chlamydiia</taxon>
        <taxon>Chlamydiales</taxon>
        <taxon>Chlamydiaceae</taxon>
        <taxon>Chlamydia/Chlamydophila group</taxon>
        <taxon>Chlamydia</taxon>
    </lineage>
</organism>
<sequence length="478" mass="53211">MLCTIIRGPSFLEARNQLLRSLKKCRCFEMRADLLTVSDAELQKLILLAPISVLTWKKPPSCTPQAWVKKIQSLAKLHPTYLDLDKDFPEEEILHIRHLHPNIKIIRSLHTSEHTDITQLYTQMLASSIDYYKLAVSPASTTDLLNICRQKHSLPQNTTVLCLGKIGQSSRILSPILQNPFTYTIPTGADPVAPGQLSLNHHYFYNFTNLSPQSQICALIGDTSRSIGHLTHNPFFSQLSIPCPYVKLPLTPQELPEFFSSIRALPFLGISVTSPLKTAIIPFLDKQDSSVKLSGSCNTLVIRQGEIIGYDTDGEGLFSVLTQHNMDLSNQRVAILGAGGAARSIAARLSRTGCELLIFNRTKIHAEAIASRYQAQAFDIKDLPLHSVSLIINCLPPSSIIPQALAPLIVDINTLPKHNSFTQYARLKGCSIIYGHEMFAQQALLQFRLWFPTHSFNHLEKNFSRRAAVLASLFSIAA</sequence>
<name>ARODE_CHLMU</name>
<evidence type="ECO:0000250" key="1">
    <source>
        <dbReference type="UniProtKB" id="O67049"/>
    </source>
</evidence>
<evidence type="ECO:0000250" key="2">
    <source>
        <dbReference type="UniProtKB" id="P58687"/>
    </source>
</evidence>
<evidence type="ECO:0000305" key="3"/>
<proteinExistence type="inferred from homology"/>
<comment type="function">
    <text evidence="1 2">Bifunctional enzyme that catalyzes two sequential steps of the aromatic amino acids biosynthetic pathway. In the first reaction, the AroD domain catalyzes the cis-dehydration of 3-dehydroquinate (DHQ) and introduces the first double bond of the aromatic ring to yield 3-dehydroshikimate; in the second reaction, the AroE domain catalyzes the reversible NADPH linked reduction of 3-dehydroshikimate (DHSA) to yield shikimate (SA).</text>
</comment>
<comment type="catalytic activity">
    <reaction evidence="2">
        <text>3-dehydroquinate = 3-dehydroshikimate + H2O</text>
        <dbReference type="Rhea" id="RHEA:21096"/>
        <dbReference type="ChEBI" id="CHEBI:15377"/>
        <dbReference type="ChEBI" id="CHEBI:16630"/>
        <dbReference type="ChEBI" id="CHEBI:32364"/>
        <dbReference type="EC" id="4.2.1.10"/>
    </reaction>
</comment>
<comment type="catalytic activity">
    <reaction evidence="1">
        <text>shikimate + NADP(+) = 3-dehydroshikimate + NADPH + H(+)</text>
        <dbReference type="Rhea" id="RHEA:17737"/>
        <dbReference type="ChEBI" id="CHEBI:15378"/>
        <dbReference type="ChEBI" id="CHEBI:16630"/>
        <dbReference type="ChEBI" id="CHEBI:36208"/>
        <dbReference type="ChEBI" id="CHEBI:57783"/>
        <dbReference type="ChEBI" id="CHEBI:58349"/>
        <dbReference type="EC" id="1.1.1.25"/>
    </reaction>
</comment>
<comment type="pathway">
    <text evidence="2">Metabolic intermediate biosynthesis; chorismate biosynthesis; chorismate from D-erythrose 4-phosphate and phosphoenolpyruvate: step 3/7.</text>
</comment>
<comment type="pathway">
    <text evidence="1">Metabolic intermediate biosynthesis; chorismate biosynthesis; chorismate from D-erythrose 4-phosphate and phosphoenolpyruvate: step 4/7.</text>
</comment>
<comment type="similarity">
    <text evidence="2">In the N-terminal section; belongs to the type-I 3-dehydroquinase family.</text>
</comment>
<comment type="similarity">
    <text evidence="1">In the C-terminal section; belongs to the shikimate dehydrogenase family.</text>
</comment>
<protein>
    <recommendedName>
        <fullName evidence="3">Shikimate biosynthesis protein AroDE</fullName>
    </recommendedName>
    <domain>
        <recommendedName>
            <fullName evidence="2">3-dehydroquinate dehydratase</fullName>
            <shortName evidence="2">3-dehydroquinase</shortName>
            <ecNumber evidence="2">4.2.1.10</ecNumber>
        </recommendedName>
        <alternativeName>
            <fullName evidence="2">Type I DHQase</fullName>
        </alternativeName>
        <alternativeName>
            <fullName evidence="2">Type I dehydroquinase</fullName>
            <shortName evidence="2">DHQ1</shortName>
        </alternativeName>
    </domain>
    <domain>
        <recommendedName>
            <fullName evidence="1">Shikimate dehydrogenase (NADP(+))</fullName>
            <shortName evidence="1">SDH</shortName>
            <ecNumber evidence="1">1.1.1.25</ecNumber>
        </recommendedName>
    </domain>
</protein>
<keyword id="KW-0028">Amino-acid biosynthesis</keyword>
<keyword id="KW-0057">Aromatic amino acid biosynthesis</keyword>
<keyword id="KW-0456">Lyase</keyword>
<keyword id="KW-0511">Multifunctional enzyme</keyword>
<keyword id="KW-0521">NADP</keyword>
<keyword id="KW-0560">Oxidoreductase</keyword>
<keyword id="KW-0704">Schiff base</keyword>
<accession>P56961</accession>
<dbReference type="EC" id="4.2.1.10" evidence="2"/>
<dbReference type="EC" id="1.1.1.25" evidence="1"/>
<dbReference type="EMBL" id="AE002160">
    <property type="protein sequence ID" value="AAF39475.1"/>
    <property type="molecule type" value="Genomic_DNA"/>
</dbReference>
<dbReference type="PIR" id="G81679">
    <property type="entry name" value="G81679"/>
</dbReference>
<dbReference type="RefSeq" id="WP_010231110.1">
    <property type="nucleotide sequence ID" value="NZ_CP063055.1"/>
</dbReference>
<dbReference type="SMR" id="P56961"/>
<dbReference type="GeneID" id="1246010"/>
<dbReference type="KEGG" id="cmu:TC_0649"/>
<dbReference type="eggNOG" id="COG0169">
    <property type="taxonomic scope" value="Bacteria"/>
</dbReference>
<dbReference type="eggNOG" id="COG0710">
    <property type="taxonomic scope" value="Bacteria"/>
</dbReference>
<dbReference type="HOGENOM" id="CLU_019120_1_1_0"/>
<dbReference type="OrthoDB" id="9792692at2"/>
<dbReference type="UniPathway" id="UPA00053">
    <property type="reaction ID" value="UER00086"/>
</dbReference>
<dbReference type="UniPathway" id="UPA00053">
    <property type="reaction ID" value="UER00087"/>
</dbReference>
<dbReference type="Proteomes" id="UP000000800">
    <property type="component" value="Chromosome"/>
</dbReference>
<dbReference type="GO" id="GO:0003855">
    <property type="term" value="F:3-dehydroquinate dehydratase activity"/>
    <property type="evidence" value="ECO:0000250"/>
    <property type="project" value="UniProtKB"/>
</dbReference>
<dbReference type="GO" id="GO:0050661">
    <property type="term" value="F:NADP binding"/>
    <property type="evidence" value="ECO:0000250"/>
    <property type="project" value="UniProtKB"/>
</dbReference>
<dbReference type="GO" id="GO:0004764">
    <property type="term" value="F:shikimate 3-dehydrogenase (NADP+) activity"/>
    <property type="evidence" value="ECO:0000250"/>
    <property type="project" value="UniProtKB"/>
</dbReference>
<dbReference type="GO" id="GO:0046279">
    <property type="term" value="P:3,4-dihydroxybenzoate biosynthetic process"/>
    <property type="evidence" value="ECO:0007669"/>
    <property type="project" value="UniProtKB-ARBA"/>
</dbReference>
<dbReference type="GO" id="GO:0008652">
    <property type="term" value="P:amino acid biosynthetic process"/>
    <property type="evidence" value="ECO:0007669"/>
    <property type="project" value="UniProtKB-KW"/>
</dbReference>
<dbReference type="GO" id="GO:0009073">
    <property type="term" value="P:aromatic amino acid family biosynthetic process"/>
    <property type="evidence" value="ECO:0007669"/>
    <property type="project" value="UniProtKB-KW"/>
</dbReference>
<dbReference type="GO" id="GO:0009423">
    <property type="term" value="P:chorismate biosynthetic process"/>
    <property type="evidence" value="ECO:0000250"/>
    <property type="project" value="UniProtKB"/>
</dbReference>
<dbReference type="GO" id="GO:0019632">
    <property type="term" value="P:shikimate metabolic process"/>
    <property type="evidence" value="ECO:0000250"/>
    <property type="project" value="UniProtKB"/>
</dbReference>
<dbReference type="CDD" id="cd00502">
    <property type="entry name" value="DHQase_I"/>
    <property type="match status" value="1"/>
</dbReference>
<dbReference type="CDD" id="cd01065">
    <property type="entry name" value="NAD_bind_Shikimate_DH"/>
    <property type="match status" value="1"/>
</dbReference>
<dbReference type="FunFam" id="3.20.20.70:FF:000391">
    <property type="entry name" value="Shikimate biosynthesis protein AroDE"/>
    <property type="match status" value="1"/>
</dbReference>
<dbReference type="FunFam" id="3.40.50.720:FF:001164">
    <property type="entry name" value="Shikimate biosynthesis protein AroDE"/>
    <property type="match status" value="1"/>
</dbReference>
<dbReference type="Gene3D" id="3.20.20.70">
    <property type="entry name" value="Aldolase class I"/>
    <property type="match status" value="1"/>
</dbReference>
<dbReference type="Gene3D" id="3.40.50.10860">
    <property type="entry name" value="Leucine Dehydrogenase, chain A, domain 1"/>
    <property type="match status" value="1"/>
</dbReference>
<dbReference type="Gene3D" id="3.40.50.720">
    <property type="entry name" value="NAD(P)-binding Rossmann-like Domain"/>
    <property type="match status" value="1"/>
</dbReference>
<dbReference type="HAMAP" id="MF_00214">
    <property type="entry name" value="AroD"/>
    <property type="match status" value="1"/>
</dbReference>
<dbReference type="InterPro" id="IPR013785">
    <property type="entry name" value="Aldolase_TIM"/>
</dbReference>
<dbReference type="InterPro" id="IPR046346">
    <property type="entry name" value="Aminoacid_DH-like_N_sf"/>
</dbReference>
<dbReference type="InterPro" id="IPR001381">
    <property type="entry name" value="DHquinase_I"/>
</dbReference>
<dbReference type="InterPro" id="IPR036291">
    <property type="entry name" value="NAD(P)-bd_dom_sf"/>
</dbReference>
<dbReference type="InterPro" id="IPR011342">
    <property type="entry name" value="Shikimate_DH"/>
</dbReference>
<dbReference type="InterPro" id="IPR013708">
    <property type="entry name" value="Shikimate_DH-bd_N"/>
</dbReference>
<dbReference type="InterPro" id="IPR006151">
    <property type="entry name" value="Shikm_DH/Glu-tRNA_Rdtase"/>
</dbReference>
<dbReference type="InterPro" id="IPR050146">
    <property type="entry name" value="Type-I_3-dehydroquinase"/>
</dbReference>
<dbReference type="NCBIfam" id="TIGR00507">
    <property type="entry name" value="aroE"/>
    <property type="match status" value="1"/>
</dbReference>
<dbReference type="NCBIfam" id="NF006802">
    <property type="entry name" value="PRK09310.1"/>
    <property type="match status" value="1"/>
</dbReference>
<dbReference type="PANTHER" id="PTHR43699">
    <property type="entry name" value="3-DEHYDROQUINATE DEHYDRATASE"/>
    <property type="match status" value="1"/>
</dbReference>
<dbReference type="PANTHER" id="PTHR43699:SF1">
    <property type="entry name" value="3-DEHYDROQUINATE DEHYDRATASE"/>
    <property type="match status" value="1"/>
</dbReference>
<dbReference type="Pfam" id="PF01487">
    <property type="entry name" value="DHquinase_I"/>
    <property type="match status" value="1"/>
</dbReference>
<dbReference type="Pfam" id="PF01488">
    <property type="entry name" value="Shikimate_DH"/>
    <property type="match status" value="1"/>
</dbReference>
<dbReference type="Pfam" id="PF08501">
    <property type="entry name" value="Shikimate_dh_N"/>
    <property type="match status" value="1"/>
</dbReference>
<dbReference type="SUPFAM" id="SSF51569">
    <property type="entry name" value="Aldolase"/>
    <property type="match status" value="1"/>
</dbReference>
<dbReference type="SUPFAM" id="SSF53223">
    <property type="entry name" value="Aminoacid dehydrogenase-like, N-terminal domain"/>
    <property type="match status" value="1"/>
</dbReference>
<dbReference type="SUPFAM" id="SSF51735">
    <property type="entry name" value="NAD(P)-binding Rossmann-fold domains"/>
    <property type="match status" value="1"/>
</dbReference>